<protein>
    <recommendedName>
        <fullName>Small, acid-soluble spore protein 2</fullName>
        <shortName>SASP</shortName>
    </recommendedName>
</protein>
<accession>P52969</accession>
<proteinExistence type="inferred from homology"/>
<feature type="chain" id="PRO_0000196313" description="Small, acid-soluble spore protein 2">
    <location>
        <begin position="1"/>
        <end position="67"/>
    </location>
</feature>
<feature type="site" description="Cleavage; by spore protease">
    <location>
        <begin position="25"/>
        <end position="26"/>
    </location>
</feature>
<comment type="function">
    <text>SASP are bound to spore DNA. They are double-stranded DNA-binding proteins that cause DNA to change to an a-like conformation. They protect the DNA backbone from chemical and enzymatic cleavage and are thus involved in dormant spore's high resistance to UV light.</text>
</comment>
<comment type="miscellaneous">
    <text>SASP are degraded in the first minutes of spore germination and provide amino acids for both new protein synthesis and metabolism.</text>
</comment>
<comment type="similarity">
    <text evidence="1">Belongs to the alpha/beta-type SASP family.</text>
</comment>
<organism>
    <name type="scientific">Sporosarcina ureae</name>
    <dbReference type="NCBI Taxonomy" id="1571"/>
    <lineage>
        <taxon>Bacteria</taxon>
        <taxon>Bacillati</taxon>
        <taxon>Bacillota</taxon>
        <taxon>Bacilli</taxon>
        <taxon>Bacillales</taxon>
        <taxon>Caryophanaceae</taxon>
        <taxon>Sporosarcina</taxon>
    </lineage>
</organism>
<evidence type="ECO:0000305" key="1"/>
<name>SAS2_SPOUR</name>
<dbReference type="EMBL" id="X55159">
    <property type="protein sequence ID" value="CAA38958.1"/>
    <property type="molecule type" value="Genomic_DNA"/>
</dbReference>
<dbReference type="PIR" id="B48180">
    <property type="entry name" value="B48180"/>
</dbReference>
<dbReference type="RefSeq" id="WP_029052872.1">
    <property type="nucleotide sequence ID" value="NZ_DAMDTU010000002.1"/>
</dbReference>
<dbReference type="SMR" id="P52969"/>
<dbReference type="eggNOG" id="ENOG5032YCI">
    <property type="taxonomic scope" value="Bacteria"/>
</dbReference>
<dbReference type="GO" id="GO:0003690">
    <property type="term" value="F:double-stranded DNA binding"/>
    <property type="evidence" value="ECO:0007669"/>
    <property type="project" value="InterPro"/>
</dbReference>
<dbReference type="GO" id="GO:0006265">
    <property type="term" value="P:DNA topological change"/>
    <property type="evidence" value="ECO:0007669"/>
    <property type="project" value="InterPro"/>
</dbReference>
<dbReference type="GO" id="GO:0030435">
    <property type="term" value="P:sporulation resulting in formation of a cellular spore"/>
    <property type="evidence" value="ECO:0007669"/>
    <property type="project" value="UniProtKB-KW"/>
</dbReference>
<dbReference type="Gene3D" id="6.10.10.80">
    <property type="entry name" value="Small, acid-soluble spore protein, alpha/beta type-like"/>
    <property type="match status" value="1"/>
</dbReference>
<dbReference type="InterPro" id="IPR001448">
    <property type="entry name" value="SASP_alpha/beta-type"/>
</dbReference>
<dbReference type="InterPro" id="IPR018126">
    <property type="entry name" value="SASP_alpha/beta-type_CS"/>
</dbReference>
<dbReference type="InterPro" id="IPR050847">
    <property type="entry name" value="SASP_DNA-binding"/>
</dbReference>
<dbReference type="InterPro" id="IPR038300">
    <property type="entry name" value="SASP_sf_alpha/beta"/>
</dbReference>
<dbReference type="PANTHER" id="PTHR36107">
    <property type="entry name" value="SMALL, ACID-SOLUBLE SPORE PROTEIN A"/>
    <property type="match status" value="1"/>
</dbReference>
<dbReference type="PANTHER" id="PTHR36107:SF1">
    <property type="entry name" value="SMALL, ACID-SOLUBLE SPORE PROTEIN A"/>
    <property type="match status" value="1"/>
</dbReference>
<dbReference type="Pfam" id="PF00269">
    <property type="entry name" value="SASP"/>
    <property type="match status" value="1"/>
</dbReference>
<dbReference type="PROSITE" id="PS00304">
    <property type="entry name" value="SASP_1"/>
    <property type="match status" value="1"/>
</dbReference>
<dbReference type="PROSITE" id="PS00684">
    <property type="entry name" value="SASP_2"/>
    <property type="match status" value="1"/>
</dbReference>
<sequence length="67" mass="7176">MPNNNSSNQLLVPGVQQALNQMKEEIASEFGVQLGPDASSRANGSVGGEITKRLVRQAQSQMNGYTK</sequence>
<reference key="1">
    <citation type="journal article" date="1990" name="FEMS Microbiol. Lett.">
        <title>Small, acid-soluble, spore proteins and their genes from two species of Sporosarcina.</title>
        <authorList>
            <person name="Magill N.G."/>
            <person name="Loshon C.A."/>
            <person name="Setlow P."/>
        </authorList>
    </citation>
    <scope>NUCLEOTIDE SEQUENCE [GENOMIC DNA]</scope>
    <source>
        <strain>ATCC 13881 / BS 860</strain>
    </source>
</reference>
<keyword id="KW-0238">DNA-binding</keyword>
<keyword id="KW-0749">Sporulation</keyword>
<gene>
    <name type="primary">Su-2</name>
</gene>